<sequence>MERTFLMIKPDAVQRNLIGEVISRIERKGLKLVGGKLMQVPMELAETHYGEHQGKPFYNDLISFITSAPVFAMVVEGEDAVNVSRHIIGSTNPSEASPGSIRGDLGLTVGRNIIHGSDSLESAEREINLWFNENEITSYASPRDAWLYE</sequence>
<reference key="1">
    <citation type="book" date="2006" name="Gram positive pathogens, 2nd edition">
        <title>The Staphylococcus aureus NCTC 8325 genome.</title>
        <editorList>
            <person name="Fischetti V."/>
            <person name="Novick R."/>
            <person name="Ferretti J."/>
            <person name="Portnoy D."/>
            <person name="Rood J."/>
        </editorList>
        <authorList>
            <person name="Gillaspy A.F."/>
            <person name="Worrell V."/>
            <person name="Orvis J."/>
            <person name="Roe B.A."/>
            <person name="Dyer D.W."/>
            <person name="Iandolo J.J."/>
        </authorList>
    </citation>
    <scope>NUCLEOTIDE SEQUENCE [LARGE SCALE GENOMIC DNA]</scope>
    <source>
        <strain>NCTC 8325 / PS 47</strain>
    </source>
</reference>
<organism>
    <name type="scientific">Staphylococcus aureus (strain NCTC 8325 / PS 47)</name>
    <dbReference type="NCBI Taxonomy" id="93061"/>
    <lineage>
        <taxon>Bacteria</taxon>
        <taxon>Bacillati</taxon>
        <taxon>Bacillota</taxon>
        <taxon>Bacilli</taxon>
        <taxon>Bacillales</taxon>
        <taxon>Staphylococcaceae</taxon>
        <taxon>Staphylococcus</taxon>
    </lineage>
</organism>
<accession>Q2FYG7</accession>
<evidence type="ECO:0000255" key="1">
    <source>
        <dbReference type="HAMAP-Rule" id="MF_00451"/>
    </source>
</evidence>
<evidence type="ECO:0000305" key="2"/>
<dbReference type="EC" id="2.7.4.6" evidence="1"/>
<dbReference type="EMBL" id="CP000253">
    <property type="protein sequence ID" value="ABD30570.1"/>
    <property type="status" value="ALT_INIT"/>
    <property type="molecule type" value="Genomic_DNA"/>
</dbReference>
<dbReference type="RefSeq" id="WP_000442480.1">
    <property type="nucleotide sequence ID" value="NZ_LS483365.1"/>
</dbReference>
<dbReference type="RefSeq" id="WP_000594897.1">
    <property type="nucleotide sequence ID" value="NC_007795.1"/>
</dbReference>
<dbReference type="RefSeq" id="YP_500003.1">
    <property type="nucleotide sequence ID" value="NC_007795.1"/>
</dbReference>
<dbReference type="SMR" id="Q2FYG7"/>
<dbReference type="STRING" id="93061.SAOUHSC_01485"/>
<dbReference type="PaxDb" id="1280-SAXN108_1490"/>
<dbReference type="GeneID" id="3920240"/>
<dbReference type="GeneID" id="66839658"/>
<dbReference type="KEGG" id="sao:SAOUHSC_01485"/>
<dbReference type="PATRIC" id="fig|93061.5.peg.1354"/>
<dbReference type="eggNOG" id="COG0105">
    <property type="taxonomic scope" value="Bacteria"/>
</dbReference>
<dbReference type="HOGENOM" id="CLU_060216_6_3_9"/>
<dbReference type="OrthoDB" id="9801161at2"/>
<dbReference type="Proteomes" id="UP000008816">
    <property type="component" value="Chromosome"/>
</dbReference>
<dbReference type="GO" id="GO:0005737">
    <property type="term" value="C:cytoplasm"/>
    <property type="evidence" value="ECO:0007669"/>
    <property type="project" value="UniProtKB-SubCell"/>
</dbReference>
<dbReference type="GO" id="GO:0005524">
    <property type="term" value="F:ATP binding"/>
    <property type="evidence" value="ECO:0007669"/>
    <property type="project" value="UniProtKB-UniRule"/>
</dbReference>
<dbReference type="GO" id="GO:0046872">
    <property type="term" value="F:metal ion binding"/>
    <property type="evidence" value="ECO:0007669"/>
    <property type="project" value="UniProtKB-KW"/>
</dbReference>
<dbReference type="GO" id="GO:0004550">
    <property type="term" value="F:nucleoside diphosphate kinase activity"/>
    <property type="evidence" value="ECO:0007669"/>
    <property type="project" value="UniProtKB-UniRule"/>
</dbReference>
<dbReference type="GO" id="GO:0006241">
    <property type="term" value="P:CTP biosynthetic process"/>
    <property type="evidence" value="ECO:0007669"/>
    <property type="project" value="UniProtKB-UniRule"/>
</dbReference>
<dbReference type="GO" id="GO:0006183">
    <property type="term" value="P:GTP biosynthetic process"/>
    <property type="evidence" value="ECO:0007669"/>
    <property type="project" value="UniProtKB-UniRule"/>
</dbReference>
<dbReference type="GO" id="GO:0006228">
    <property type="term" value="P:UTP biosynthetic process"/>
    <property type="evidence" value="ECO:0007669"/>
    <property type="project" value="UniProtKB-UniRule"/>
</dbReference>
<dbReference type="CDD" id="cd04413">
    <property type="entry name" value="NDPk_I"/>
    <property type="match status" value="1"/>
</dbReference>
<dbReference type="FunFam" id="3.30.70.141:FF:000002">
    <property type="entry name" value="Nucleoside diphosphate kinase"/>
    <property type="match status" value="1"/>
</dbReference>
<dbReference type="Gene3D" id="3.30.70.141">
    <property type="entry name" value="Nucleoside diphosphate kinase-like domain"/>
    <property type="match status" value="1"/>
</dbReference>
<dbReference type="HAMAP" id="MF_00451">
    <property type="entry name" value="NDP_kinase"/>
    <property type="match status" value="1"/>
</dbReference>
<dbReference type="InterPro" id="IPR034907">
    <property type="entry name" value="NDK-like_dom"/>
</dbReference>
<dbReference type="InterPro" id="IPR036850">
    <property type="entry name" value="NDK-like_dom_sf"/>
</dbReference>
<dbReference type="InterPro" id="IPR001564">
    <property type="entry name" value="Nucleoside_diP_kinase"/>
</dbReference>
<dbReference type="InterPro" id="IPR023005">
    <property type="entry name" value="Nucleoside_diP_kinase_AS"/>
</dbReference>
<dbReference type="NCBIfam" id="NF001908">
    <property type="entry name" value="PRK00668.1"/>
    <property type="match status" value="1"/>
</dbReference>
<dbReference type="PANTHER" id="PTHR11349">
    <property type="entry name" value="NUCLEOSIDE DIPHOSPHATE KINASE"/>
    <property type="match status" value="1"/>
</dbReference>
<dbReference type="Pfam" id="PF00334">
    <property type="entry name" value="NDK"/>
    <property type="match status" value="1"/>
</dbReference>
<dbReference type="PRINTS" id="PR01243">
    <property type="entry name" value="NUCDPKINASE"/>
</dbReference>
<dbReference type="SMART" id="SM00562">
    <property type="entry name" value="NDK"/>
    <property type="match status" value="1"/>
</dbReference>
<dbReference type="SUPFAM" id="SSF54919">
    <property type="entry name" value="Nucleoside diphosphate kinase, NDK"/>
    <property type="match status" value="1"/>
</dbReference>
<dbReference type="PROSITE" id="PS00469">
    <property type="entry name" value="NDPK"/>
    <property type="match status" value="1"/>
</dbReference>
<dbReference type="PROSITE" id="PS51374">
    <property type="entry name" value="NDPK_LIKE"/>
    <property type="match status" value="1"/>
</dbReference>
<proteinExistence type="inferred from homology"/>
<feature type="chain" id="PRO_0000267806" description="Nucleoside diphosphate kinase">
    <location>
        <begin position="1"/>
        <end position="149"/>
    </location>
</feature>
<feature type="active site" description="Pros-phosphohistidine intermediate" evidence="1">
    <location>
        <position position="115"/>
    </location>
</feature>
<feature type="binding site" evidence="1">
    <location>
        <position position="9"/>
    </location>
    <ligand>
        <name>ATP</name>
        <dbReference type="ChEBI" id="CHEBI:30616"/>
    </ligand>
</feature>
<feature type="binding site" evidence="1">
    <location>
        <position position="57"/>
    </location>
    <ligand>
        <name>ATP</name>
        <dbReference type="ChEBI" id="CHEBI:30616"/>
    </ligand>
</feature>
<feature type="binding site" evidence="1">
    <location>
        <position position="85"/>
    </location>
    <ligand>
        <name>ATP</name>
        <dbReference type="ChEBI" id="CHEBI:30616"/>
    </ligand>
</feature>
<feature type="binding site" evidence="1">
    <location>
        <position position="91"/>
    </location>
    <ligand>
        <name>ATP</name>
        <dbReference type="ChEBI" id="CHEBI:30616"/>
    </ligand>
</feature>
<feature type="binding site" evidence="1">
    <location>
        <position position="102"/>
    </location>
    <ligand>
        <name>ATP</name>
        <dbReference type="ChEBI" id="CHEBI:30616"/>
    </ligand>
</feature>
<feature type="binding site" evidence="1">
    <location>
        <position position="112"/>
    </location>
    <ligand>
        <name>ATP</name>
        <dbReference type="ChEBI" id="CHEBI:30616"/>
    </ligand>
</feature>
<gene>
    <name evidence="1" type="primary">ndk</name>
    <name type="ordered locus">SAOUHSC_01485</name>
</gene>
<keyword id="KW-0067">ATP-binding</keyword>
<keyword id="KW-0963">Cytoplasm</keyword>
<keyword id="KW-0418">Kinase</keyword>
<keyword id="KW-0460">Magnesium</keyword>
<keyword id="KW-0479">Metal-binding</keyword>
<keyword id="KW-0546">Nucleotide metabolism</keyword>
<keyword id="KW-0547">Nucleotide-binding</keyword>
<keyword id="KW-0597">Phosphoprotein</keyword>
<keyword id="KW-1185">Reference proteome</keyword>
<keyword id="KW-0808">Transferase</keyword>
<name>NDK_STAA8</name>
<protein>
    <recommendedName>
        <fullName evidence="1">Nucleoside diphosphate kinase</fullName>
        <shortName evidence="1">NDK</shortName>
        <shortName evidence="1">NDP kinase</shortName>
        <ecNumber evidence="1">2.7.4.6</ecNumber>
    </recommendedName>
    <alternativeName>
        <fullName evidence="1">Nucleoside-2-P kinase</fullName>
    </alternativeName>
</protein>
<comment type="function">
    <text evidence="1">Major role in the synthesis of nucleoside triphosphates other than ATP. The ATP gamma phosphate is transferred to the NDP beta phosphate via a ping-pong mechanism, using a phosphorylated active-site intermediate.</text>
</comment>
<comment type="catalytic activity">
    <reaction evidence="1">
        <text>a 2'-deoxyribonucleoside 5'-diphosphate + ATP = a 2'-deoxyribonucleoside 5'-triphosphate + ADP</text>
        <dbReference type="Rhea" id="RHEA:44640"/>
        <dbReference type="ChEBI" id="CHEBI:30616"/>
        <dbReference type="ChEBI" id="CHEBI:61560"/>
        <dbReference type="ChEBI" id="CHEBI:73316"/>
        <dbReference type="ChEBI" id="CHEBI:456216"/>
        <dbReference type="EC" id="2.7.4.6"/>
    </reaction>
</comment>
<comment type="catalytic activity">
    <reaction evidence="1">
        <text>a ribonucleoside 5'-diphosphate + ATP = a ribonucleoside 5'-triphosphate + ADP</text>
        <dbReference type="Rhea" id="RHEA:18113"/>
        <dbReference type="ChEBI" id="CHEBI:30616"/>
        <dbReference type="ChEBI" id="CHEBI:57930"/>
        <dbReference type="ChEBI" id="CHEBI:61557"/>
        <dbReference type="ChEBI" id="CHEBI:456216"/>
        <dbReference type="EC" id="2.7.4.6"/>
    </reaction>
</comment>
<comment type="cofactor">
    <cofactor evidence="1">
        <name>Mg(2+)</name>
        <dbReference type="ChEBI" id="CHEBI:18420"/>
    </cofactor>
</comment>
<comment type="subunit">
    <text evidence="1">Homotetramer.</text>
</comment>
<comment type="subcellular location">
    <subcellularLocation>
        <location evidence="1">Cytoplasm</location>
    </subcellularLocation>
</comment>
<comment type="similarity">
    <text evidence="1">Belongs to the NDK family.</text>
</comment>
<comment type="sequence caution" evidence="2">
    <conflict type="erroneous initiation">
        <sequence resource="EMBL-CDS" id="ABD30570"/>
    </conflict>
</comment>